<name>LPXB_CHRSD</name>
<proteinExistence type="inferred from homology"/>
<sequence>MRIYLVAGELSGDILGAGLMQALKRRHPDAEFRGIGGPRMLAEGMQSLYPLETLSVMGLVEVLKHLPGLIKVRRHLRRDALAWQPDVMIGIDAPDFNLGLERQLRATGMRTVHYVSPSVWAWRQGRVKTIARSVDAMLTFLPFEAAFYARHQVPVAFVGHPLADELPLVNDRQAARTALGLSSTAPLLAVLPGSRGNEIRFLGPTFLDSAVWLRERVPGLQVVIPAASPARRQELEVLLATHPAREFVHLRDGESRQAMTAADAVLLASGTAALEAMLCHRPMVVAYKMAAATHWLAKRMVKTEWISLPNLIAQETLVPELVQEDASCEAIGEALLTWLGDETHRQATETRFAALHATLQRGASERAAEAIDSLVVHGRLPEEPTA</sequence>
<feature type="chain" id="PRO_0000255174" description="Lipid-A-disaccharide synthase">
    <location>
        <begin position="1"/>
        <end position="386"/>
    </location>
</feature>
<gene>
    <name evidence="1" type="primary">lpxB</name>
    <name type="ordered locus">Csal_0576</name>
</gene>
<reference key="1">
    <citation type="journal article" date="2011" name="Stand. Genomic Sci.">
        <title>Complete genome sequence of the halophilic and highly halotolerant Chromohalobacter salexigens type strain (1H11(T)).</title>
        <authorList>
            <person name="Copeland A."/>
            <person name="O'Connor K."/>
            <person name="Lucas S."/>
            <person name="Lapidus A."/>
            <person name="Berry K.W."/>
            <person name="Detter J.C."/>
            <person name="Del Rio T.G."/>
            <person name="Hammon N."/>
            <person name="Dalin E."/>
            <person name="Tice H."/>
            <person name="Pitluck S."/>
            <person name="Bruce D."/>
            <person name="Goodwin L."/>
            <person name="Han C."/>
            <person name="Tapia R."/>
            <person name="Saunders E."/>
            <person name="Schmutz J."/>
            <person name="Brettin T."/>
            <person name="Larimer F."/>
            <person name="Land M."/>
            <person name="Hauser L."/>
            <person name="Vargas C."/>
            <person name="Nieto J.J."/>
            <person name="Kyrpides N.C."/>
            <person name="Ivanova N."/>
            <person name="Goker M."/>
            <person name="Klenk H.P."/>
            <person name="Csonka L.N."/>
            <person name="Woyke T."/>
        </authorList>
    </citation>
    <scope>NUCLEOTIDE SEQUENCE [LARGE SCALE GENOMIC DNA]</scope>
    <source>
        <strain>ATCC BAA-138 / DSM 3043 / CIP 106854 / NCIMB 13768 / 1H11</strain>
    </source>
</reference>
<protein>
    <recommendedName>
        <fullName evidence="1">Lipid-A-disaccharide synthase</fullName>
        <ecNumber evidence="1">2.4.1.182</ecNumber>
    </recommendedName>
</protein>
<accession>Q1R020</accession>
<dbReference type="EC" id="2.4.1.182" evidence="1"/>
<dbReference type="EMBL" id="CP000285">
    <property type="protein sequence ID" value="ABE57938.1"/>
    <property type="molecule type" value="Genomic_DNA"/>
</dbReference>
<dbReference type="RefSeq" id="WP_011505884.1">
    <property type="nucleotide sequence ID" value="NC_007963.1"/>
</dbReference>
<dbReference type="SMR" id="Q1R020"/>
<dbReference type="STRING" id="290398.Csal_0576"/>
<dbReference type="CAZy" id="GT19">
    <property type="family name" value="Glycosyltransferase Family 19"/>
</dbReference>
<dbReference type="GeneID" id="95333332"/>
<dbReference type="KEGG" id="csa:Csal_0576"/>
<dbReference type="eggNOG" id="COG0763">
    <property type="taxonomic scope" value="Bacteria"/>
</dbReference>
<dbReference type="HOGENOM" id="CLU_036577_3_0_6"/>
<dbReference type="OrthoDB" id="9801642at2"/>
<dbReference type="UniPathway" id="UPA00973"/>
<dbReference type="Proteomes" id="UP000000239">
    <property type="component" value="Chromosome"/>
</dbReference>
<dbReference type="GO" id="GO:0016020">
    <property type="term" value="C:membrane"/>
    <property type="evidence" value="ECO:0007669"/>
    <property type="project" value="GOC"/>
</dbReference>
<dbReference type="GO" id="GO:0008915">
    <property type="term" value="F:lipid-A-disaccharide synthase activity"/>
    <property type="evidence" value="ECO:0007669"/>
    <property type="project" value="UniProtKB-UniRule"/>
</dbReference>
<dbReference type="GO" id="GO:0005543">
    <property type="term" value="F:phospholipid binding"/>
    <property type="evidence" value="ECO:0007669"/>
    <property type="project" value="TreeGrafter"/>
</dbReference>
<dbReference type="GO" id="GO:0009245">
    <property type="term" value="P:lipid A biosynthetic process"/>
    <property type="evidence" value="ECO:0007669"/>
    <property type="project" value="UniProtKB-UniRule"/>
</dbReference>
<dbReference type="Gene3D" id="3.40.50.2000">
    <property type="entry name" value="Glycogen Phosphorylase B"/>
    <property type="match status" value="1"/>
</dbReference>
<dbReference type="HAMAP" id="MF_00392">
    <property type="entry name" value="LpxB"/>
    <property type="match status" value="1"/>
</dbReference>
<dbReference type="InterPro" id="IPR003835">
    <property type="entry name" value="Glyco_trans_19"/>
</dbReference>
<dbReference type="NCBIfam" id="TIGR00215">
    <property type="entry name" value="lpxB"/>
    <property type="match status" value="1"/>
</dbReference>
<dbReference type="PANTHER" id="PTHR30372">
    <property type="entry name" value="LIPID-A-DISACCHARIDE SYNTHASE"/>
    <property type="match status" value="1"/>
</dbReference>
<dbReference type="PANTHER" id="PTHR30372:SF4">
    <property type="entry name" value="LIPID-A-DISACCHARIDE SYNTHASE, MITOCHONDRIAL-RELATED"/>
    <property type="match status" value="1"/>
</dbReference>
<dbReference type="Pfam" id="PF02684">
    <property type="entry name" value="LpxB"/>
    <property type="match status" value="1"/>
</dbReference>
<dbReference type="SUPFAM" id="SSF53756">
    <property type="entry name" value="UDP-Glycosyltransferase/glycogen phosphorylase"/>
    <property type="match status" value="1"/>
</dbReference>
<comment type="function">
    <text evidence="1">Condensation of UDP-2,3-diacylglucosamine and 2,3-diacylglucosamine-1-phosphate to form lipid A disaccharide, a precursor of lipid A, a phosphorylated glycolipid that anchors the lipopolysaccharide to the outer membrane of the cell.</text>
</comment>
<comment type="catalytic activity">
    <reaction evidence="1">
        <text>a lipid X + a UDP-2-N,3-O-bis[(3R)-3-hydroxyacyl]-alpha-D-glucosamine = a lipid A disaccharide + UDP + H(+)</text>
        <dbReference type="Rhea" id="RHEA:67828"/>
        <dbReference type="ChEBI" id="CHEBI:15378"/>
        <dbReference type="ChEBI" id="CHEBI:58223"/>
        <dbReference type="ChEBI" id="CHEBI:137748"/>
        <dbReference type="ChEBI" id="CHEBI:176338"/>
        <dbReference type="ChEBI" id="CHEBI:176343"/>
        <dbReference type="EC" id="2.4.1.182"/>
    </reaction>
</comment>
<comment type="pathway">
    <text evidence="1">Bacterial outer membrane biogenesis; LPS lipid A biosynthesis.</text>
</comment>
<comment type="similarity">
    <text evidence="1">Belongs to the LpxB family.</text>
</comment>
<keyword id="KW-0328">Glycosyltransferase</keyword>
<keyword id="KW-0441">Lipid A biosynthesis</keyword>
<keyword id="KW-0444">Lipid biosynthesis</keyword>
<keyword id="KW-0443">Lipid metabolism</keyword>
<keyword id="KW-1185">Reference proteome</keyword>
<keyword id="KW-0808">Transferase</keyword>
<organism>
    <name type="scientific">Chromohalobacter salexigens (strain ATCC BAA-138 / DSM 3043 / CIP 106854 / NCIMB 13768 / 1H11)</name>
    <dbReference type="NCBI Taxonomy" id="290398"/>
    <lineage>
        <taxon>Bacteria</taxon>
        <taxon>Pseudomonadati</taxon>
        <taxon>Pseudomonadota</taxon>
        <taxon>Gammaproteobacteria</taxon>
        <taxon>Oceanospirillales</taxon>
        <taxon>Halomonadaceae</taxon>
        <taxon>Chromohalobacter</taxon>
    </lineage>
</organism>
<evidence type="ECO:0000255" key="1">
    <source>
        <dbReference type="HAMAP-Rule" id="MF_00392"/>
    </source>
</evidence>